<organism>
    <name type="scientific">Zea mays</name>
    <name type="common">Maize</name>
    <dbReference type="NCBI Taxonomy" id="4577"/>
    <lineage>
        <taxon>Eukaryota</taxon>
        <taxon>Viridiplantae</taxon>
        <taxon>Streptophyta</taxon>
        <taxon>Embryophyta</taxon>
        <taxon>Tracheophyta</taxon>
        <taxon>Spermatophyta</taxon>
        <taxon>Magnoliopsida</taxon>
        <taxon>Liliopsida</taxon>
        <taxon>Poales</taxon>
        <taxon>Poaceae</taxon>
        <taxon>PACMAD clade</taxon>
        <taxon>Panicoideae</taxon>
        <taxon>Andropogonodae</taxon>
        <taxon>Andropogoneae</taxon>
        <taxon>Tripsacinae</taxon>
        <taxon>Zea</taxon>
    </lineage>
</organism>
<comment type="function">
    <text evidence="1">May be involved in gibberellin metabolism.</text>
</comment>
<comment type="cofactor">
    <cofactor evidence="1">
        <name>heme</name>
        <dbReference type="ChEBI" id="CHEBI:30413"/>
    </cofactor>
</comment>
<comment type="subcellular location">
    <subcellularLocation>
        <location evidence="3">Membrane</location>
        <topology evidence="3">Single-pass type III membrane protein</topology>
    </subcellularLocation>
</comment>
<comment type="similarity">
    <text evidence="3">Belongs to the cytochrome P450 family.</text>
</comment>
<comment type="sequence caution" evidence="3">
    <conflict type="erroneous initiation">
        <sequence resource="EMBL-CDS" id="ACN33715"/>
    </conflict>
    <text>Truncated N-terminus.</text>
</comment>
<evidence type="ECO:0000250" key="1"/>
<evidence type="ECO:0000255" key="2"/>
<evidence type="ECO:0000305" key="3"/>
<name>C14B3_MAIZE</name>
<feature type="chain" id="PRO_0000422414" description="Cytochrome P450 714B3">
    <location>
        <begin position="1"/>
        <end position="527"/>
    </location>
</feature>
<feature type="topological domain" description="Lumenal" evidence="2">
    <location>
        <begin position="1"/>
        <end position="14"/>
    </location>
</feature>
<feature type="transmembrane region" description="Helical; Signal-anchor for type III membrane protein" evidence="2">
    <location>
        <begin position="15"/>
        <end position="35"/>
    </location>
</feature>
<feature type="topological domain" description="Cytoplasmic" evidence="2">
    <location>
        <begin position="36"/>
        <end position="527"/>
    </location>
</feature>
<feature type="binding site" description="axial binding residue" evidence="1">
    <location>
        <position position="464"/>
    </location>
    <ligand>
        <name>heme</name>
        <dbReference type="ChEBI" id="CHEBI:30413"/>
    </ligand>
    <ligandPart>
        <name>Fe</name>
        <dbReference type="ChEBI" id="CHEBI:18248"/>
    </ligandPart>
</feature>
<feature type="sequence conflict" description="In Ref. 2; ACN33715." evidence="3" ref="2">
    <original>N</original>
    <variation>S</variation>
    <location>
        <position position="417"/>
    </location>
</feature>
<keyword id="KW-0349">Heme</keyword>
<keyword id="KW-0408">Iron</keyword>
<keyword id="KW-0472">Membrane</keyword>
<keyword id="KW-0479">Metal-binding</keyword>
<keyword id="KW-0503">Monooxygenase</keyword>
<keyword id="KW-0560">Oxidoreductase</keyword>
<keyword id="KW-1185">Reference proteome</keyword>
<keyword id="KW-0735">Signal-anchor</keyword>
<keyword id="KW-0812">Transmembrane</keyword>
<keyword id="KW-1133">Transmembrane helix</keyword>
<sequence length="527" mass="58709">MEVAMAMAVKVLLSLCCVGACGLAVYLYHILWLVPQKVLAKFEDQKIGGPRPSFPYGNLADMREAAAAAKAARASARRSGSGGGGIVHDYRPAVLPYYEKWRKEYGPIFTYSMGNVVFLHVSRPDVVRDINLCVSLDLGKSSYLKATHEPLFGGGILKSNGEAWLHQRKIIAPEFFLDKVKGMVDLMVDSAQPLLMSWEERVDRNGGITDIKIDDDIRAYSADVISRTCFGSSYIKGKEIFMKIRELQQAVSKPNVLAEMTGLRFFPSMRNKQAWELHKQVRKLILEIVKESGEDRNLLSAILHSASTSRVGIAEAENFIVDNCKSIYFAGHESTAVTAAWCLMLLGLHPEWQNRVREEVHEVCRGQPVDSRSLQKMKNLTMVIQETLRLYPAGAFVSRQALQELKLGGVHIPKGVNIYIPVSTMHLDPELWGPDVKEFNPERFSDVRPQLHSYLPFGAGARTCLGQGFAMAELKILISLIVSKFVLKLSPHYQHSPTLKLIVEPELGVDLTLTKVQSVCTKRGTAI</sequence>
<protein>
    <recommendedName>
        <fullName>Cytochrome P450 714B3</fullName>
        <ecNumber>1.14.-.-</ecNumber>
    </recommendedName>
</protein>
<reference key="1">
    <citation type="journal article" date="2009" name="Plant Mol. Biol.">
        <title>Insights into corn genes derived from large-scale cDNA sequencing.</title>
        <authorList>
            <person name="Alexandrov N.N."/>
            <person name="Brover V.V."/>
            <person name="Freidin S."/>
            <person name="Troukhan M.E."/>
            <person name="Tatarinova T.V."/>
            <person name="Zhang H."/>
            <person name="Swaller T.J."/>
            <person name="Lu Y.-P."/>
            <person name="Bouck J."/>
            <person name="Flavell R.B."/>
            <person name="Feldmann K.A."/>
        </authorList>
    </citation>
    <scope>NUCLEOTIDE SEQUENCE [MRNA]</scope>
</reference>
<reference key="2">
    <citation type="journal article" date="2009" name="PLoS Genet.">
        <title>Sequencing, mapping, and analysis of 27,455 maize full-length cDNAs.</title>
        <authorList>
            <person name="Soderlund C."/>
            <person name="Descour A."/>
            <person name="Kudrna D."/>
            <person name="Bomhoff M."/>
            <person name="Boyd L."/>
            <person name="Currie J."/>
            <person name="Angelova A."/>
            <person name="Collura K."/>
            <person name="Wissotski M."/>
            <person name="Ashley E."/>
            <person name="Morrow D."/>
            <person name="Fernandes J."/>
            <person name="Walbot V."/>
            <person name="Yu Y."/>
        </authorList>
    </citation>
    <scope>NUCLEOTIDE SEQUENCE [MRNA] OF 154-527</scope>
    <source>
        <strain>cv. B73</strain>
    </source>
</reference>
<reference key="3">
    <citation type="journal article" date="2009" name="Hum. Genomics">
        <title>The cytochrome p450 homepage.</title>
        <authorList>
            <person name="Nelson D.R."/>
        </authorList>
    </citation>
    <scope>IDENTIFICATION</scope>
</reference>
<proteinExistence type="evidence at transcript level"/>
<accession>B6SSW8</accession>
<accession>C0PEU9</accession>
<gene>
    <name type="primary">CYP714B3</name>
</gene>
<dbReference type="EC" id="1.14.-.-"/>
<dbReference type="EMBL" id="EU955833">
    <property type="protein sequence ID" value="ACG27951.1"/>
    <property type="molecule type" value="mRNA"/>
</dbReference>
<dbReference type="EMBL" id="BT066818">
    <property type="protein sequence ID" value="ACN33715.1"/>
    <property type="status" value="ALT_INIT"/>
    <property type="molecule type" value="mRNA"/>
</dbReference>
<dbReference type="RefSeq" id="NP_001169426.1">
    <property type="nucleotide sequence ID" value="NM_001175955.1"/>
</dbReference>
<dbReference type="SMR" id="B6SSW8"/>
<dbReference type="FunCoup" id="B6SSW8">
    <property type="interactions" value="168"/>
</dbReference>
<dbReference type="STRING" id="4577.B6SSW8"/>
<dbReference type="PaxDb" id="4577-GRMZM2G106408_P01"/>
<dbReference type="eggNOG" id="KOG0157">
    <property type="taxonomic scope" value="Eukaryota"/>
</dbReference>
<dbReference type="InParanoid" id="B6SSW8"/>
<dbReference type="Proteomes" id="UP000007305">
    <property type="component" value="Unplaced"/>
</dbReference>
<dbReference type="ExpressionAtlas" id="B6SSW8">
    <property type="expression patterns" value="baseline and differential"/>
</dbReference>
<dbReference type="GO" id="GO:0016020">
    <property type="term" value="C:membrane"/>
    <property type="evidence" value="ECO:0007669"/>
    <property type="project" value="UniProtKB-SubCell"/>
</dbReference>
<dbReference type="GO" id="GO:0020037">
    <property type="term" value="F:heme binding"/>
    <property type="evidence" value="ECO:0007669"/>
    <property type="project" value="InterPro"/>
</dbReference>
<dbReference type="GO" id="GO:0005506">
    <property type="term" value="F:iron ion binding"/>
    <property type="evidence" value="ECO:0007669"/>
    <property type="project" value="InterPro"/>
</dbReference>
<dbReference type="GO" id="GO:0004497">
    <property type="term" value="F:monooxygenase activity"/>
    <property type="evidence" value="ECO:0000318"/>
    <property type="project" value="GO_Central"/>
</dbReference>
<dbReference type="GO" id="GO:0016705">
    <property type="term" value="F:oxidoreductase activity, acting on paired donors, with incorporation or reduction of molecular oxygen"/>
    <property type="evidence" value="ECO:0007669"/>
    <property type="project" value="InterPro"/>
</dbReference>
<dbReference type="GO" id="GO:0006629">
    <property type="term" value="P:lipid metabolic process"/>
    <property type="evidence" value="ECO:0007669"/>
    <property type="project" value="UniProtKB-ARBA"/>
</dbReference>
<dbReference type="CDD" id="cd20640">
    <property type="entry name" value="CYP714"/>
    <property type="match status" value="1"/>
</dbReference>
<dbReference type="Gene3D" id="1.10.630.10">
    <property type="entry name" value="Cytochrome P450"/>
    <property type="match status" value="1"/>
</dbReference>
<dbReference type="InterPro" id="IPR001128">
    <property type="entry name" value="Cyt_P450"/>
</dbReference>
<dbReference type="InterPro" id="IPR017972">
    <property type="entry name" value="Cyt_P450_CS"/>
</dbReference>
<dbReference type="InterPro" id="IPR002401">
    <property type="entry name" value="Cyt_P450_E_grp-I"/>
</dbReference>
<dbReference type="InterPro" id="IPR036396">
    <property type="entry name" value="Cyt_P450_sf"/>
</dbReference>
<dbReference type="InterPro" id="IPR050665">
    <property type="entry name" value="Cytochrome_P450_Monooxygen"/>
</dbReference>
<dbReference type="PANTHER" id="PTHR24282:SF261">
    <property type="entry name" value="CYTOCHROME P450 714B2"/>
    <property type="match status" value="1"/>
</dbReference>
<dbReference type="PANTHER" id="PTHR24282">
    <property type="entry name" value="CYTOCHROME P450 FAMILY MEMBER"/>
    <property type="match status" value="1"/>
</dbReference>
<dbReference type="Pfam" id="PF00067">
    <property type="entry name" value="p450"/>
    <property type="match status" value="1"/>
</dbReference>
<dbReference type="PRINTS" id="PR00463">
    <property type="entry name" value="EP450I"/>
</dbReference>
<dbReference type="PRINTS" id="PR00385">
    <property type="entry name" value="P450"/>
</dbReference>
<dbReference type="SUPFAM" id="SSF48264">
    <property type="entry name" value="Cytochrome P450"/>
    <property type="match status" value="1"/>
</dbReference>
<dbReference type="PROSITE" id="PS00086">
    <property type="entry name" value="CYTOCHROME_P450"/>
    <property type="match status" value="1"/>
</dbReference>